<dbReference type="EC" id="6.3.5.2" evidence="1"/>
<dbReference type="EMBL" id="CP000439">
    <property type="protein sequence ID" value="ABK89785.1"/>
    <property type="molecule type" value="Genomic_DNA"/>
</dbReference>
<dbReference type="RefSeq" id="WP_003039205.1">
    <property type="nucleotide sequence ID" value="NZ_CP009633.1"/>
</dbReference>
<dbReference type="SMR" id="A0Q6C0"/>
<dbReference type="KEGG" id="ftn:FTN_0897"/>
<dbReference type="KEGG" id="ftx:AW25_1121"/>
<dbReference type="BioCyc" id="FTUL401614:G1G75-935-MONOMER"/>
<dbReference type="UniPathway" id="UPA00189">
    <property type="reaction ID" value="UER00296"/>
</dbReference>
<dbReference type="Proteomes" id="UP000000762">
    <property type="component" value="Chromosome"/>
</dbReference>
<dbReference type="GO" id="GO:0005829">
    <property type="term" value="C:cytosol"/>
    <property type="evidence" value="ECO:0007669"/>
    <property type="project" value="TreeGrafter"/>
</dbReference>
<dbReference type="GO" id="GO:0005524">
    <property type="term" value="F:ATP binding"/>
    <property type="evidence" value="ECO:0007669"/>
    <property type="project" value="UniProtKB-UniRule"/>
</dbReference>
<dbReference type="GO" id="GO:0003921">
    <property type="term" value="F:GMP synthase activity"/>
    <property type="evidence" value="ECO:0007669"/>
    <property type="project" value="InterPro"/>
</dbReference>
<dbReference type="CDD" id="cd01742">
    <property type="entry name" value="GATase1_GMP_Synthase"/>
    <property type="match status" value="1"/>
</dbReference>
<dbReference type="CDD" id="cd01997">
    <property type="entry name" value="GMP_synthase_C"/>
    <property type="match status" value="1"/>
</dbReference>
<dbReference type="FunFam" id="3.30.300.10:FF:000002">
    <property type="entry name" value="GMP synthase [glutamine-hydrolyzing]"/>
    <property type="match status" value="1"/>
</dbReference>
<dbReference type="FunFam" id="3.40.50.620:FF:000001">
    <property type="entry name" value="GMP synthase [glutamine-hydrolyzing]"/>
    <property type="match status" value="1"/>
</dbReference>
<dbReference type="FunFam" id="3.40.50.880:FF:000001">
    <property type="entry name" value="GMP synthase [glutamine-hydrolyzing]"/>
    <property type="match status" value="1"/>
</dbReference>
<dbReference type="Gene3D" id="3.30.300.10">
    <property type="match status" value="1"/>
</dbReference>
<dbReference type="Gene3D" id="3.40.50.880">
    <property type="match status" value="1"/>
</dbReference>
<dbReference type="Gene3D" id="3.40.50.620">
    <property type="entry name" value="HUPs"/>
    <property type="match status" value="1"/>
</dbReference>
<dbReference type="HAMAP" id="MF_00344">
    <property type="entry name" value="GMP_synthase"/>
    <property type="match status" value="1"/>
</dbReference>
<dbReference type="InterPro" id="IPR029062">
    <property type="entry name" value="Class_I_gatase-like"/>
</dbReference>
<dbReference type="InterPro" id="IPR017926">
    <property type="entry name" value="GATASE"/>
</dbReference>
<dbReference type="InterPro" id="IPR001674">
    <property type="entry name" value="GMP_synth_C"/>
</dbReference>
<dbReference type="InterPro" id="IPR004739">
    <property type="entry name" value="GMP_synth_GATase"/>
</dbReference>
<dbReference type="InterPro" id="IPR022955">
    <property type="entry name" value="GMP_synthase"/>
</dbReference>
<dbReference type="InterPro" id="IPR025777">
    <property type="entry name" value="GMPS_ATP_PPase_dom"/>
</dbReference>
<dbReference type="InterPro" id="IPR022310">
    <property type="entry name" value="NAD/GMP_synthase"/>
</dbReference>
<dbReference type="InterPro" id="IPR014729">
    <property type="entry name" value="Rossmann-like_a/b/a_fold"/>
</dbReference>
<dbReference type="NCBIfam" id="TIGR00884">
    <property type="entry name" value="guaA_Cterm"/>
    <property type="match status" value="1"/>
</dbReference>
<dbReference type="NCBIfam" id="TIGR00888">
    <property type="entry name" value="guaA_Nterm"/>
    <property type="match status" value="1"/>
</dbReference>
<dbReference type="NCBIfam" id="NF000848">
    <property type="entry name" value="PRK00074.1"/>
    <property type="match status" value="1"/>
</dbReference>
<dbReference type="PANTHER" id="PTHR11922:SF2">
    <property type="entry name" value="GMP SYNTHASE [GLUTAMINE-HYDROLYZING]"/>
    <property type="match status" value="1"/>
</dbReference>
<dbReference type="PANTHER" id="PTHR11922">
    <property type="entry name" value="GMP SYNTHASE-RELATED"/>
    <property type="match status" value="1"/>
</dbReference>
<dbReference type="Pfam" id="PF00117">
    <property type="entry name" value="GATase"/>
    <property type="match status" value="1"/>
</dbReference>
<dbReference type="Pfam" id="PF00958">
    <property type="entry name" value="GMP_synt_C"/>
    <property type="match status" value="1"/>
</dbReference>
<dbReference type="Pfam" id="PF02540">
    <property type="entry name" value="NAD_synthase"/>
    <property type="match status" value="1"/>
</dbReference>
<dbReference type="PRINTS" id="PR00097">
    <property type="entry name" value="ANTSNTHASEII"/>
</dbReference>
<dbReference type="PRINTS" id="PR00096">
    <property type="entry name" value="GATASE"/>
</dbReference>
<dbReference type="SUPFAM" id="SSF52402">
    <property type="entry name" value="Adenine nucleotide alpha hydrolases-like"/>
    <property type="match status" value="1"/>
</dbReference>
<dbReference type="SUPFAM" id="SSF52317">
    <property type="entry name" value="Class I glutamine amidotransferase-like"/>
    <property type="match status" value="1"/>
</dbReference>
<dbReference type="SUPFAM" id="SSF54810">
    <property type="entry name" value="GMP synthetase C-terminal dimerisation domain"/>
    <property type="match status" value="1"/>
</dbReference>
<dbReference type="PROSITE" id="PS51273">
    <property type="entry name" value="GATASE_TYPE_1"/>
    <property type="match status" value="1"/>
</dbReference>
<dbReference type="PROSITE" id="PS51553">
    <property type="entry name" value="GMPS_ATP_PPASE"/>
    <property type="match status" value="1"/>
</dbReference>
<name>GUAA_FRATN</name>
<accession>A0Q6C0</accession>
<proteinExistence type="inferred from homology"/>
<organism>
    <name type="scientific">Francisella tularensis subsp. novicida (strain U112)</name>
    <dbReference type="NCBI Taxonomy" id="401614"/>
    <lineage>
        <taxon>Bacteria</taxon>
        <taxon>Pseudomonadati</taxon>
        <taxon>Pseudomonadota</taxon>
        <taxon>Gammaproteobacteria</taxon>
        <taxon>Thiotrichales</taxon>
        <taxon>Francisellaceae</taxon>
        <taxon>Francisella</taxon>
    </lineage>
</organism>
<protein>
    <recommendedName>
        <fullName evidence="1">GMP synthase [glutamine-hydrolyzing]</fullName>
        <ecNumber evidence="1">6.3.5.2</ecNumber>
    </recommendedName>
    <alternativeName>
        <fullName evidence="1">GMP synthetase</fullName>
    </alternativeName>
    <alternativeName>
        <fullName evidence="1">Glutamine amidotransferase</fullName>
    </alternativeName>
</protein>
<keyword id="KW-0067">ATP-binding</keyword>
<keyword id="KW-0315">Glutamine amidotransferase</keyword>
<keyword id="KW-0332">GMP biosynthesis</keyword>
<keyword id="KW-0436">Ligase</keyword>
<keyword id="KW-0547">Nucleotide-binding</keyword>
<keyword id="KW-0658">Purine biosynthesis</keyword>
<gene>
    <name evidence="1" type="primary">guaA</name>
    <name type="ordered locus">FTN_0897</name>
</gene>
<reference key="1">
    <citation type="journal article" date="2007" name="Genome Biol.">
        <title>Comparison of Francisella tularensis genomes reveals evolutionary events associated with the emergence of human pathogenic strains.</title>
        <authorList>
            <person name="Rohmer L."/>
            <person name="Fong C."/>
            <person name="Abmayr S."/>
            <person name="Wasnick M."/>
            <person name="Larson Freeman T.J."/>
            <person name="Radey M."/>
            <person name="Guina T."/>
            <person name="Svensson K."/>
            <person name="Hayden H.S."/>
            <person name="Jacobs M."/>
            <person name="Gallagher L.A."/>
            <person name="Manoil C."/>
            <person name="Ernst R.K."/>
            <person name="Drees B."/>
            <person name="Buckley D."/>
            <person name="Haugen E."/>
            <person name="Bovee D."/>
            <person name="Zhou Y."/>
            <person name="Chang J."/>
            <person name="Levy R."/>
            <person name="Lim R."/>
            <person name="Gillett W."/>
            <person name="Guenthener D."/>
            <person name="Kang A."/>
            <person name="Shaffer S.A."/>
            <person name="Taylor G."/>
            <person name="Chen J."/>
            <person name="Gallis B."/>
            <person name="D'Argenio D.A."/>
            <person name="Forsman M."/>
            <person name="Olson M.V."/>
            <person name="Goodlett D.R."/>
            <person name="Kaul R."/>
            <person name="Miller S.I."/>
            <person name="Brittnacher M.J."/>
        </authorList>
    </citation>
    <scope>NUCLEOTIDE SEQUENCE [LARGE SCALE GENOMIC DNA]</scope>
    <source>
        <strain>U112</strain>
    </source>
</reference>
<feature type="chain" id="PRO_1000120305" description="GMP synthase [glutamine-hydrolyzing]">
    <location>
        <begin position="1"/>
        <end position="516"/>
    </location>
</feature>
<feature type="domain" description="Glutamine amidotransferase type-1" evidence="1">
    <location>
        <begin position="8"/>
        <end position="198"/>
    </location>
</feature>
<feature type="domain" description="GMPS ATP-PPase" evidence="1">
    <location>
        <begin position="199"/>
        <end position="391"/>
    </location>
</feature>
<feature type="active site" description="Nucleophile" evidence="1">
    <location>
        <position position="84"/>
    </location>
</feature>
<feature type="active site" evidence="1">
    <location>
        <position position="172"/>
    </location>
</feature>
<feature type="active site" evidence="1">
    <location>
        <position position="174"/>
    </location>
</feature>
<feature type="binding site" evidence="1">
    <location>
        <begin position="226"/>
        <end position="232"/>
    </location>
    <ligand>
        <name>ATP</name>
        <dbReference type="ChEBI" id="CHEBI:30616"/>
    </ligand>
</feature>
<comment type="function">
    <text evidence="1">Catalyzes the synthesis of GMP from XMP.</text>
</comment>
<comment type="catalytic activity">
    <reaction evidence="1">
        <text>XMP + L-glutamine + ATP + H2O = GMP + L-glutamate + AMP + diphosphate + 2 H(+)</text>
        <dbReference type="Rhea" id="RHEA:11680"/>
        <dbReference type="ChEBI" id="CHEBI:15377"/>
        <dbReference type="ChEBI" id="CHEBI:15378"/>
        <dbReference type="ChEBI" id="CHEBI:29985"/>
        <dbReference type="ChEBI" id="CHEBI:30616"/>
        <dbReference type="ChEBI" id="CHEBI:33019"/>
        <dbReference type="ChEBI" id="CHEBI:57464"/>
        <dbReference type="ChEBI" id="CHEBI:58115"/>
        <dbReference type="ChEBI" id="CHEBI:58359"/>
        <dbReference type="ChEBI" id="CHEBI:456215"/>
        <dbReference type="EC" id="6.3.5.2"/>
    </reaction>
</comment>
<comment type="pathway">
    <text evidence="1">Purine metabolism; GMP biosynthesis; GMP from XMP (L-Gln route): step 1/1.</text>
</comment>
<comment type="subunit">
    <text evidence="1">Homodimer.</text>
</comment>
<evidence type="ECO:0000255" key="1">
    <source>
        <dbReference type="HAMAP-Rule" id="MF_00344"/>
    </source>
</evidence>
<sequence length="516" mass="57613">MTDIHNHKILILDFGSQYTQLIARRVREVGVFCEIFPHDVAADFIKNYQAKGIILSGGPESVYDSDVKAPEIVFKLGIPVLGICYGMQTMVMQHGGEVKGADQSEFGKAIINILNSTNNIFSNMEHEQLVWMSHSDKVTQTGEHFEIIASSTNAPVAAVAHKSKPFFGVQFHPETTHTENGKQIIENFVVNICGCDTLWNIENIIENDIKEIKQKVGTDKVILGLSGGVDSSVVAAILHQAIGDQLTCIFVDTGLLRLNEGNQVMQVFAEHMDINVIRINAKNRFLDALRGICDPEQKRKIIGKLFVDIFDEEAAKIENAKWLAQGTIYSDVIESAGNNQSKAHVIKSHHNVGGLPKEMKLKLLEPLRELFKDEVRKLGLGLGLPYNMLYRHPFPGPGLGVRILGEIKKEYVETLQKADAIFTEELYKHNLYHDVSQAFGVFLPVKSVGVVGDQRRYEYVIALRAVVSIDFMTATWANLPYDFLSLVSNRIVNEVKQVSRVVYDVTGKPPGTIEWE</sequence>